<sequence>MVSTHLTSTTLPDCYRSLIVNSELGSSALMDLNSPSFLYPLLHTPADKGTLCTYQAALGKVYASLEVIGVGDDKLQAVHGLNGGKPHRDILGSRITRPTGIKPLCLPRHILAYDWLAQSLLGIVIGSISLAYNELLMMEKLKGFRPFVPHIPFDFYLCEMAFPRVKPAPDETSFSEALLKRNQDLAPNSAEQQIEEVRQVGSYKKGTMTTGHNVADLVVILKILPTFLTMLTNETGFEISSSDATVKILITTVPPNLRKLDPELHLDIKVLQSALAAIRHARWFEENASQSTVKVLIRLLKDLRIRFPGFEPLTPWILDLLGHYAVMNNPTRQPLALNVAYRRCLQILAAGLFLPGSVGITDPCESGNFRVHTVMTLEQQDMVCYTAQTLVRILSHGGFRKILGQEGDASYLASEISTWDGVIVTPSEKAYEKPPEKKEGEEEEENTEEPPQGEEEESMETQE</sequence>
<protein>
    <recommendedName>
        <fullName>Interleukin enhancer-binding factor 2</fullName>
    </recommendedName>
    <alternativeName>
        <fullName>Liver regeneration-related protein LRRG031</fullName>
    </alternativeName>
</protein>
<name>ILF2_RAT</name>
<dbReference type="EMBL" id="AY325142">
    <property type="protein sequence ID" value="AAP92543.1"/>
    <property type="molecule type" value="mRNA"/>
</dbReference>
<dbReference type="RefSeq" id="NP_001041351.1">
    <property type="nucleotide sequence ID" value="NM_001047886.1"/>
</dbReference>
<dbReference type="SMR" id="Q7TP98"/>
<dbReference type="BioGRID" id="259671">
    <property type="interactions" value="5"/>
</dbReference>
<dbReference type="CORUM" id="Q7TP98"/>
<dbReference type="FunCoup" id="Q7TP98">
    <property type="interactions" value="3276"/>
</dbReference>
<dbReference type="IntAct" id="Q7TP98">
    <property type="interactions" value="2"/>
</dbReference>
<dbReference type="MINT" id="Q7TP98"/>
<dbReference type="STRING" id="10116.ENSRNOP00000045539"/>
<dbReference type="PhosphoSitePlus" id="Q7TP98"/>
<dbReference type="jPOST" id="Q7TP98"/>
<dbReference type="PaxDb" id="10116-ENSRNOP00000045539"/>
<dbReference type="UCSC" id="RGD:1305734">
    <property type="organism name" value="rat"/>
</dbReference>
<dbReference type="AGR" id="RGD:1305734"/>
<dbReference type="RGD" id="1305734">
    <property type="gene designation" value="Ilf2"/>
</dbReference>
<dbReference type="eggNOG" id="KOG3793">
    <property type="taxonomic scope" value="Eukaryota"/>
</dbReference>
<dbReference type="HOGENOM" id="CLU_589956_0_0_1"/>
<dbReference type="InParanoid" id="Q7TP98"/>
<dbReference type="PhylomeDB" id="Q7TP98"/>
<dbReference type="TreeFam" id="TF320194"/>
<dbReference type="Reactome" id="R-RNO-6798695">
    <property type="pathway name" value="Neutrophil degranulation"/>
</dbReference>
<dbReference type="Reactome" id="R-RNO-9833482">
    <property type="pathway name" value="PKR-mediated signaling"/>
</dbReference>
<dbReference type="PRO" id="PR:Q7TP98"/>
<dbReference type="Proteomes" id="UP000002494">
    <property type="component" value="Unplaced"/>
</dbReference>
<dbReference type="GO" id="GO:0005737">
    <property type="term" value="C:cytoplasm"/>
    <property type="evidence" value="ECO:0007669"/>
    <property type="project" value="UniProtKB-SubCell"/>
</dbReference>
<dbReference type="GO" id="GO:0005730">
    <property type="term" value="C:nucleolus"/>
    <property type="evidence" value="ECO:0000250"/>
    <property type="project" value="UniProtKB"/>
</dbReference>
<dbReference type="GO" id="GO:0005634">
    <property type="term" value="C:nucleus"/>
    <property type="evidence" value="ECO:0000250"/>
    <property type="project" value="UniProtKB"/>
</dbReference>
<dbReference type="GO" id="GO:1990904">
    <property type="term" value="C:ribonucleoprotein complex"/>
    <property type="evidence" value="ECO:0000250"/>
    <property type="project" value="UniProtKB"/>
</dbReference>
<dbReference type="GO" id="GO:0003677">
    <property type="term" value="F:DNA binding"/>
    <property type="evidence" value="ECO:0000250"/>
    <property type="project" value="UniProtKB"/>
</dbReference>
<dbReference type="GO" id="GO:0003725">
    <property type="term" value="F:double-stranded RNA binding"/>
    <property type="evidence" value="ECO:0000250"/>
    <property type="project" value="UniProtKB"/>
</dbReference>
<dbReference type="GO" id="GO:0045893">
    <property type="term" value="P:positive regulation of DNA-templated transcription"/>
    <property type="evidence" value="ECO:0000250"/>
    <property type="project" value="UniProtKB"/>
</dbReference>
<dbReference type="FunFam" id="1.10.1410.40:FF:000004">
    <property type="entry name" value="Interleukin enhancer-binding factor 2"/>
    <property type="match status" value="1"/>
</dbReference>
<dbReference type="FunFam" id="1.10.1410.40:FF:000010">
    <property type="entry name" value="Interleukin enhancer-binding factor 2"/>
    <property type="match status" value="1"/>
</dbReference>
<dbReference type="FunFam" id="3.30.460.10:FF:000058">
    <property type="entry name" value="Interleukin enhancer-binding factor 2"/>
    <property type="match status" value="1"/>
</dbReference>
<dbReference type="Gene3D" id="1.10.1410.40">
    <property type="match status" value="1"/>
</dbReference>
<dbReference type="Gene3D" id="3.30.460.10">
    <property type="entry name" value="Beta Polymerase, domain 2"/>
    <property type="match status" value="1"/>
</dbReference>
<dbReference type="InterPro" id="IPR006561">
    <property type="entry name" value="DZF_dom"/>
</dbReference>
<dbReference type="InterPro" id="IPR049402">
    <property type="entry name" value="DZF_dom_C"/>
</dbReference>
<dbReference type="InterPro" id="IPR049401">
    <property type="entry name" value="DZF_dom_N"/>
</dbReference>
<dbReference type="InterPro" id="IPR052134">
    <property type="entry name" value="ILF2"/>
</dbReference>
<dbReference type="InterPro" id="IPR043519">
    <property type="entry name" value="NT_sf"/>
</dbReference>
<dbReference type="PANTHER" id="PTHR46447">
    <property type="entry name" value="INTERLEUKIN ENHANCER-BINDING FACTOR"/>
    <property type="match status" value="1"/>
</dbReference>
<dbReference type="PANTHER" id="PTHR46447:SF1">
    <property type="entry name" value="INTERLEUKIN ENHANCER-BINDING FACTOR 2"/>
    <property type="match status" value="1"/>
</dbReference>
<dbReference type="Pfam" id="PF20965">
    <property type="entry name" value="DZF_C"/>
    <property type="match status" value="1"/>
</dbReference>
<dbReference type="Pfam" id="PF07528">
    <property type="entry name" value="DZF_N"/>
    <property type="match status" value="2"/>
</dbReference>
<dbReference type="SMART" id="SM00572">
    <property type="entry name" value="DZF"/>
    <property type="match status" value="1"/>
</dbReference>
<dbReference type="SUPFAM" id="SSF81301">
    <property type="entry name" value="Nucleotidyltransferase"/>
    <property type="match status" value="1"/>
</dbReference>
<dbReference type="PROSITE" id="PS51703">
    <property type="entry name" value="DZF"/>
    <property type="match status" value="1"/>
</dbReference>
<comment type="function">
    <text evidence="1">Chromatin-interacting protein that forms a stable heterodimer with interleukin enhancer-binding factor 3/ILF3 and plays a role in several biological processes including transcription, innate immunity or cell growth. Essential for the efficient reshuttling of ILF3 (isoform 1 and isoform 2) into the nucleus. Together with ILF3, forms an RNA-binding complex that is required for mitotic progression and cytokinesis by regulating the expression of a cluster of mitotic genes. Mechanistically, competes with STAU1/STAU2-mediated mRNA decay. Plays also a role in the inhibition of various viruses including Japanese encephalitis virus or enterovirus 71.</text>
</comment>
<comment type="subunit">
    <text evidence="1">Forms heterodimers with ILF3. ILF2-ILF3 heterodimers may also bind to PRKDC/XRCC7: this may stabilize the interaction of PRKDC/XRCC7 and the heterodimeric complex of G22P1/KU70 and XRCC5/KU80. Forms a complex with ILF3, YLPM1, KHDRBS1, RBMX, NCOA5 and PPP1CA. Identified in a IGF2BP1-dependent mRNP granule complex containing untranslated mRNAs. Interacts with IGF2BP1. Interacts with CRBN; this interaction promotes ubiquitination and subsequent degradation of ILF2.</text>
</comment>
<comment type="subcellular location">
    <subcellularLocation>
        <location evidence="1">Nucleus</location>
        <location evidence="1">Nucleolus</location>
    </subcellularLocation>
    <subcellularLocation>
        <location evidence="1">Cytoplasm</location>
    </subcellularLocation>
    <subcellularLocation>
        <location evidence="1">Nucleus</location>
    </subcellularLocation>
    <text evidence="1">Localized in cytoplasmic mRNP granules containing untranslated mRNAs.</text>
</comment>
<comment type="PTM">
    <text evidence="1">Ubiquitinated at Lys-166 by CRBN with polyubiquitin chains by the CUL4-RING E3 ligase (CRL4-CRBN) and then degraded by the proteasome.</text>
</comment>
<evidence type="ECO:0000250" key="1">
    <source>
        <dbReference type="UniProtKB" id="Q12905"/>
    </source>
</evidence>
<evidence type="ECO:0000250" key="2">
    <source>
        <dbReference type="UniProtKB" id="Q9CXY6"/>
    </source>
</evidence>
<evidence type="ECO:0000255" key="3">
    <source>
        <dbReference type="PROSITE-ProRule" id="PRU01040"/>
    </source>
</evidence>
<evidence type="ECO:0000256" key="4">
    <source>
        <dbReference type="SAM" id="MobiDB-lite"/>
    </source>
</evidence>
<gene>
    <name type="primary">Ilf2</name>
    <name type="ORF">Ab1-143</name>
</gene>
<keyword id="KW-0010">Activator</keyword>
<keyword id="KW-0963">Cytoplasm</keyword>
<keyword id="KW-0238">DNA-binding</keyword>
<keyword id="KW-1017">Isopeptide bond</keyword>
<keyword id="KW-0488">Methylation</keyword>
<keyword id="KW-0539">Nucleus</keyword>
<keyword id="KW-0597">Phosphoprotein</keyword>
<keyword id="KW-1185">Reference proteome</keyword>
<keyword id="KW-0804">Transcription</keyword>
<keyword id="KW-0805">Transcription regulation</keyword>
<keyword id="KW-0832">Ubl conjugation</keyword>
<organism>
    <name type="scientific">Rattus norvegicus</name>
    <name type="common">Rat</name>
    <dbReference type="NCBI Taxonomy" id="10116"/>
    <lineage>
        <taxon>Eukaryota</taxon>
        <taxon>Metazoa</taxon>
        <taxon>Chordata</taxon>
        <taxon>Craniata</taxon>
        <taxon>Vertebrata</taxon>
        <taxon>Euteleostomi</taxon>
        <taxon>Mammalia</taxon>
        <taxon>Eutheria</taxon>
        <taxon>Euarchontoglires</taxon>
        <taxon>Glires</taxon>
        <taxon>Rodentia</taxon>
        <taxon>Myomorpha</taxon>
        <taxon>Muroidea</taxon>
        <taxon>Muridae</taxon>
        <taxon>Murinae</taxon>
        <taxon>Rattus</taxon>
    </lineage>
</organism>
<proteinExistence type="evidence at transcript level"/>
<reference key="1">
    <citation type="submission" date="2003-06" db="EMBL/GenBank/DDBJ databases">
        <title>Liver regeneration after PH.</title>
        <authorList>
            <person name="Xu C.S."/>
            <person name="Li W.Q."/>
            <person name="Li Y.C."/>
            <person name="Han H.P."/>
            <person name="Wang G.P."/>
            <person name="Chai L.Q."/>
            <person name="Yuan J.Y."/>
            <person name="Yang K.J."/>
            <person name="Yan H.M."/>
            <person name="Chang C.F."/>
            <person name="Zhao L.F."/>
            <person name="Ma H."/>
            <person name="Wang L."/>
            <person name="Wang S.F."/>
            <person name="Shi J.B."/>
            <person name="Rahman S."/>
            <person name="Wang Q.N."/>
            <person name="Zhang J.B."/>
        </authorList>
    </citation>
    <scope>NUCLEOTIDE SEQUENCE [LARGE SCALE MRNA]</scope>
    <source>
        <tissue>Liver</tissue>
    </source>
</reference>
<feature type="chain" id="PRO_0000126066" description="Interleukin enhancer-binding factor 2">
    <location>
        <begin position="1"/>
        <end position="463"/>
    </location>
</feature>
<feature type="domain" description="DZF" evidence="3">
    <location>
        <begin position="108"/>
        <end position="444"/>
    </location>
</feature>
<feature type="region of interest" description="Disordered" evidence="4">
    <location>
        <begin position="424"/>
        <end position="463"/>
    </location>
</feature>
<feature type="compositionally biased region" description="Basic and acidic residues" evidence="4">
    <location>
        <begin position="429"/>
        <end position="440"/>
    </location>
</feature>
<feature type="compositionally biased region" description="Acidic residues" evidence="4">
    <location>
        <begin position="441"/>
        <end position="463"/>
    </location>
</feature>
<feature type="modified residue" description="Asymmetric dimethylarginine; alternate" evidence="2">
    <location>
        <position position="94"/>
    </location>
</feature>
<feature type="modified residue" description="Omega-N-methylarginine; alternate" evidence="1">
    <location>
        <position position="94"/>
    </location>
</feature>
<feature type="modified residue" description="Omega-N-methylarginine" evidence="1">
    <location>
        <position position="145"/>
    </location>
</feature>
<feature type="modified residue" description="Phosphoserine" evidence="1">
    <location>
        <position position="173"/>
    </location>
</feature>
<feature type="modified residue" description="Phosphoserine" evidence="1">
    <location>
        <position position="189"/>
    </location>
</feature>
<feature type="modified residue" description="Phosphothreonine" evidence="1">
    <location>
        <position position="461"/>
    </location>
</feature>
<feature type="cross-link" description="Glycyl lysine isopeptide (Lys-Gly) (interchain with G-Cter in ubiquitin)" evidence="1">
    <location>
        <position position="166"/>
    </location>
</feature>
<feature type="cross-link" description="Glycyl lysine isopeptide (Lys-Gly) (interchain with G-Cter in SUMO2)" evidence="1">
    <location>
        <position position="259"/>
    </location>
</feature>
<feature type="cross-link" description="Glycyl lysine isopeptide (Lys-Gly) (interchain with G-Cter in SUMO2)" evidence="1">
    <location>
        <position position="437"/>
    </location>
</feature>
<accession>Q7TP98</accession>